<name>LFTR_ECO5E</name>
<sequence length="234" mass="26618">MRLVQLSRHSIAFPSPEGALREPNGLLALGGDLSPARLLMAYQRGIFPWFSPGDPILWWSPDPRAVLWPESLHISRSMKRFHKRSPYRVTMNYAFGQVIEGCASDREEGTWITRGVVEAYHRLHELGHAHSIEVWREDELVGGMYGVAQGTLFCGESMFSRMENASKTALLVFCEEFIGHGGKLIDCQVLNDHTASLGACEIPRRNYLNYLNQMRLGRLPNNFWVPRCLFSPQE</sequence>
<dbReference type="EC" id="2.3.2.6" evidence="1"/>
<dbReference type="EMBL" id="CP001164">
    <property type="protein sequence ID" value="ACI38322.1"/>
    <property type="molecule type" value="Genomic_DNA"/>
</dbReference>
<dbReference type="RefSeq" id="WP_001241680.1">
    <property type="nucleotide sequence ID" value="NC_011353.1"/>
</dbReference>
<dbReference type="SMR" id="B5YT20"/>
<dbReference type="KEGG" id="ecf:ECH74115_1047"/>
<dbReference type="HOGENOM" id="CLU_075045_0_0_6"/>
<dbReference type="GO" id="GO:0005737">
    <property type="term" value="C:cytoplasm"/>
    <property type="evidence" value="ECO:0007669"/>
    <property type="project" value="UniProtKB-SubCell"/>
</dbReference>
<dbReference type="GO" id="GO:0008914">
    <property type="term" value="F:leucyl-tRNA--protein transferase activity"/>
    <property type="evidence" value="ECO:0007669"/>
    <property type="project" value="UniProtKB-UniRule"/>
</dbReference>
<dbReference type="GO" id="GO:0030163">
    <property type="term" value="P:protein catabolic process"/>
    <property type="evidence" value="ECO:0007669"/>
    <property type="project" value="UniProtKB-UniRule"/>
</dbReference>
<dbReference type="FunFam" id="3.30.70.3550:FF:000001">
    <property type="entry name" value="Leucyl/phenylalanyl-tRNA--protein transferase"/>
    <property type="match status" value="1"/>
</dbReference>
<dbReference type="FunFam" id="3.40.630.70:FF:000001">
    <property type="entry name" value="Leucyl/phenylalanyl-tRNA--protein transferase"/>
    <property type="match status" value="1"/>
</dbReference>
<dbReference type="Gene3D" id="3.40.630.70">
    <property type="entry name" value="Leucyl/phenylalanyl-tRNA-protein transferase, C-terminal domain"/>
    <property type="match status" value="1"/>
</dbReference>
<dbReference type="Gene3D" id="3.30.70.3550">
    <property type="entry name" value="Leucyl/phenylalanyl-tRNA-protein transferase, N-terminal domain"/>
    <property type="match status" value="1"/>
</dbReference>
<dbReference type="HAMAP" id="MF_00688">
    <property type="entry name" value="Leu_Phe_trans"/>
    <property type="match status" value="1"/>
</dbReference>
<dbReference type="InterPro" id="IPR016181">
    <property type="entry name" value="Acyl_CoA_acyltransferase"/>
</dbReference>
<dbReference type="InterPro" id="IPR004616">
    <property type="entry name" value="Leu/Phe-tRNA_Trfase"/>
</dbReference>
<dbReference type="InterPro" id="IPR042203">
    <property type="entry name" value="Leu/Phe-tRNA_Trfase_C"/>
</dbReference>
<dbReference type="InterPro" id="IPR042221">
    <property type="entry name" value="Leu/Phe-tRNA_Trfase_N"/>
</dbReference>
<dbReference type="NCBIfam" id="TIGR00667">
    <property type="entry name" value="aat"/>
    <property type="match status" value="1"/>
</dbReference>
<dbReference type="PANTHER" id="PTHR30098">
    <property type="entry name" value="LEUCYL/PHENYLALANYL-TRNA--PROTEIN TRANSFERASE"/>
    <property type="match status" value="1"/>
</dbReference>
<dbReference type="PANTHER" id="PTHR30098:SF2">
    <property type="entry name" value="LEUCYL_PHENYLALANYL-TRNA--PROTEIN TRANSFERASE"/>
    <property type="match status" value="1"/>
</dbReference>
<dbReference type="Pfam" id="PF03588">
    <property type="entry name" value="Leu_Phe_trans"/>
    <property type="match status" value="1"/>
</dbReference>
<dbReference type="SUPFAM" id="SSF55729">
    <property type="entry name" value="Acyl-CoA N-acyltransferases (Nat)"/>
    <property type="match status" value="1"/>
</dbReference>
<reference key="1">
    <citation type="journal article" date="2011" name="Proc. Natl. Acad. Sci. U.S.A.">
        <title>Genomic anatomy of Escherichia coli O157:H7 outbreaks.</title>
        <authorList>
            <person name="Eppinger M."/>
            <person name="Mammel M.K."/>
            <person name="Leclerc J.E."/>
            <person name="Ravel J."/>
            <person name="Cebula T.A."/>
        </authorList>
    </citation>
    <scope>NUCLEOTIDE SEQUENCE [LARGE SCALE GENOMIC DNA]</scope>
    <source>
        <strain>EC4115 / EHEC</strain>
    </source>
</reference>
<evidence type="ECO:0000255" key="1">
    <source>
        <dbReference type="HAMAP-Rule" id="MF_00688"/>
    </source>
</evidence>
<keyword id="KW-0012">Acyltransferase</keyword>
<keyword id="KW-0963">Cytoplasm</keyword>
<keyword id="KW-0808">Transferase</keyword>
<protein>
    <recommendedName>
        <fullName evidence="1">Leucyl/phenylalanyl-tRNA--protein transferase</fullName>
        <ecNumber evidence="1">2.3.2.6</ecNumber>
    </recommendedName>
    <alternativeName>
        <fullName evidence="1">L/F-transferase</fullName>
    </alternativeName>
    <alternativeName>
        <fullName evidence="1">Leucyltransferase</fullName>
    </alternativeName>
    <alternativeName>
        <fullName evidence="1">Phenyalanyltransferase</fullName>
    </alternativeName>
</protein>
<proteinExistence type="inferred from homology"/>
<gene>
    <name evidence="1" type="primary">aat</name>
    <name type="ordered locus">ECH74115_1047</name>
</gene>
<feature type="chain" id="PRO_1000131919" description="Leucyl/phenylalanyl-tRNA--protein transferase">
    <location>
        <begin position="1"/>
        <end position="234"/>
    </location>
</feature>
<organism>
    <name type="scientific">Escherichia coli O157:H7 (strain EC4115 / EHEC)</name>
    <dbReference type="NCBI Taxonomy" id="444450"/>
    <lineage>
        <taxon>Bacteria</taxon>
        <taxon>Pseudomonadati</taxon>
        <taxon>Pseudomonadota</taxon>
        <taxon>Gammaproteobacteria</taxon>
        <taxon>Enterobacterales</taxon>
        <taxon>Enterobacteriaceae</taxon>
        <taxon>Escherichia</taxon>
    </lineage>
</organism>
<accession>B5YT20</accession>
<comment type="function">
    <text evidence="1">Functions in the N-end rule pathway of protein degradation where it conjugates Leu, Phe and, less efficiently, Met from aminoacyl-tRNAs to the N-termini of proteins containing an N-terminal arginine or lysine.</text>
</comment>
<comment type="catalytic activity">
    <reaction evidence="1">
        <text>N-terminal L-lysyl-[protein] + L-leucyl-tRNA(Leu) = N-terminal L-leucyl-L-lysyl-[protein] + tRNA(Leu) + H(+)</text>
        <dbReference type="Rhea" id="RHEA:12340"/>
        <dbReference type="Rhea" id="RHEA-COMP:9613"/>
        <dbReference type="Rhea" id="RHEA-COMP:9622"/>
        <dbReference type="Rhea" id="RHEA-COMP:12670"/>
        <dbReference type="Rhea" id="RHEA-COMP:12671"/>
        <dbReference type="ChEBI" id="CHEBI:15378"/>
        <dbReference type="ChEBI" id="CHEBI:65249"/>
        <dbReference type="ChEBI" id="CHEBI:78442"/>
        <dbReference type="ChEBI" id="CHEBI:78494"/>
        <dbReference type="ChEBI" id="CHEBI:133043"/>
        <dbReference type="EC" id="2.3.2.6"/>
    </reaction>
</comment>
<comment type="catalytic activity">
    <reaction evidence="1">
        <text>N-terminal L-arginyl-[protein] + L-leucyl-tRNA(Leu) = N-terminal L-leucyl-L-arginyl-[protein] + tRNA(Leu) + H(+)</text>
        <dbReference type="Rhea" id="RHEA:50416"/>
        <dbReference type="Rhea" id="RHEA-COMP:9613"/>
        <dbReference type="Rhea" id="RHEA-COMP:9622"/>
        <dbReference type="Rhea" id="RHEA-COMP:12672"/>
        <dbReference type="Rhea" id="RHEA-COMP:12673"/>
        <dbReference type="ChEBI" id="CHEBI:15378"/>
        <dbReference type="ChEBI" id="CHEBI:64719"/>
        <dbReference type="ChEBI" id="CHEBI:78442"/>
        <dbReference type="ChEBI" id="CHEBI:78494"/>
        <dbReference type="ChEBI" id="CHEBI:133044"/>
        <dbReference type="EC" id="2.3.2.6"/>
    </reaction>
</comment>
<comment type="catalytic activity">
    <reaction evidence="1">
        <text>L-phenylalanyl-tRNA(Phe) + an N-terminal L-alpha-aminoacyl-[protein] = an N-terminal L-phenylalanyl-L-alpha-aminoacyl-[protein] + tRNA(Phe)</text>
        <dbReference type="Rhea" id="RHEA:43632"/>
        <dbReference type="Rhea" id="RHEA-COMP:9668"/>
        <dbReference type="Rhea" id="RHEA-COMP:9699"/>
        <dbReference type="Rhea" id="RHEA-COMP:10636"/>
        <dbReference type="Rhea" id="RHEA-COMP:10637"/>
        <dbReference type="ChEBI" id="CHEBI:78442"/>
        <dbReference type="ChEBI" id="CHEBI:78531"/>
        <dbReference type="ChEBI" id="CHEBI:78597"/>
        <dbReference type="ChEBI" id="CHEBI:83561"/>
        <dbReference type="EC" id="2.3.2.6"/>
    </reaction>
</comment>
<comment type="subcellular location">
    <subcellularLocation>
        <location evidence="1">Cytoplasm</location>
    </subcellularLocation>
</comment>
<comment type="similarity">
    <text evidence="1">Belongs to the L/F-transferase family.</text>
</comment>